<keyword id="KW-0285">Flavoprotein</keyword>
<keyword id="KW-0288">FMN</keyword>
<keyword id="KW-0520">NAD</keyword>
<keyword id="KW-0560">Oxidoreductase</keyword>
<proteinExistence type="inferred from homology"/>
<reference key="1">
    <citation type="journal article" date="2005" name="J. Bacteriol.">
        <title>Genomic sequence of an otitis media isolate of nontypeable Haemophilus influenzae: comparative study with H. influenzae serotype d, strain KW20.</title>
        <authorList>
            <person name="Harrison A."/>
            <person name="Dyer D.W."/>
            <person name="Gillaspy A."/>
            <person name="Ray W.C."/>
            <person name="Mungur R."/>
            <person name="Carson M.B."/>
            <person name="Zhong H."/>
            <person name="Gipson J."/>
            <person name="Gipson M."/>
            <person name="Johnson L.S."/>
            <person name="Lewis L."/>
            <person name="Bakaletz L.O."/>
            <person name="Munson R.S. Jr."/>
        </authorList>
    </citation>
    <scope>NUCLEOTIDE SEQUENCE [LARGE SCALE GENOMIC DNA]</scope>
    <source>
        <strain>86-028NP</strain>
    </source>
</reference>
<feature type="chain" id="PRO_0000245920" description="FMN-dependent NADH:quinone oxidoreductase">
    <location>
        <begin position="1"/>
        <end position="194"/>
    </location>
</feature>
<feature type="binding site" evidence="1">
    <location>
        <position position="10"/>
    </location>
    <ligand>
        <name>FMN</name>
        <dbReference type="ChEBI" id="CHEBI:58210"/>
    </ligand>
</feature>
<feature type="binding site" evidence="1">
    <location>
        <begin position="90"/>
        <end position="93"/>
    </location>
    <ligand>
        <name>FMN</name>
        <dbReference type="ChEBI" id="CHEBI:58210"/>
    </ligand>
</feature>
<name>AZOR_HAEI8</name>
<dbReference type="EC" id="1.6.5.-" evidence="1"/>
<dbReference type="EC" id="1.7.1.17" evidence="1"/>
<dbReference type="EMBL" id="CP000057">
    <property type="protein sequence ID" value="AAX88571.1"/>
    <property type="molecule type" value="Genomic_DNA"/>
</dbReference>
<dbReference type="RefSeq" id="WP_011272638.1">
    <property type="nucleotide sequence ID" value="NC_007146.2"/>
</dbReference>
<dbReference type="SMR" id="Q4QK76"/>
<dbReference type="GeneID" id="93220512"/>
<dbReference type="KEGG" id="hit:NTHI1798"/>
<dbReference type="HOGENOM" id="CLU_088964_0_0_6"/>
<dbReference type="Proteomes" id="UP000002525">
    <property type="component" value="Chromosome"/>
</dbReference>
<dbReference type="GO" id="GO:0009055">
    <property type="term" value="F:electron transfer activity"/>
    <property type="evidence" value="ECO:0007669"/>
    <property type="project" value="UniProtKB-UniRule"/>
</dbReference>
<dbReference type="GO" id="GO:0010181">
    <property type="term" value="F:FMN binding"/>
    <property type="evidence" value="ECO:0007669"/>
    <property type="project" value="UniProtKB-UniRule"/>
</dbReference>
<dbReference type="GO" id="GO:0016652">
    <property type="term" value="F:oxidoreductase activity, acting on NAD(P)H as acceptor"/>
    <property type="evidence" value="ECO:0007669"/>
    <property type="project" value="UniProtKB-UniRule"/>
</dbReference>
<dbReference type="GO" id="GO:0016655">
    <property type="term" value="F:oxidoreductase activity, acting on NAD(P)H, quinone or similar compound as acceptor"/>
    <property type="evidence" value="ECO:0007669"/>
    <property type="project" value="InterPro"/>
</dbReference>
<dbReference type="Gene3D" id="3.40.50.360">
    <property type="match status" value="1"/>
</dbReference>
<dbReference type="HAMAP" id="MF_01216">
    <property type="entry name" value="Azoreductase_type1"/>
    <property type="match status" value="1"/>
</dbReference>
<dbReference type="InterPro" id="IPR003680">
    <property type="entry name" value="Flavodoxin_fold"/>
</dbReference>
<dbReference type="InterPro" id="IPR029039">
    <property type="entry name" value="Flavoprotein-like_sf"/>
</dbReference>
<dbReference type="InterPro" id="IPR050104">
    <property type="entry name" value="FMN-dep_NADH:Q_OxRdtase_AzoR1"/>
</dbReference>
<dbReference type="InterPro" id="IPR023048">
    <property type="entry name" value="NADH:quinone_OxRdtase_FMN_depd"/>
</dbReference>
<dbReference type="PANTHER" id="PTHR43741">
    <property type="entry name" value="FMN-DEPENDENT NADH-AZOREDUCTASE 1"/>
    <property type="match status" value="1"/>
</dbReference>
<dbReference type="PANTHER" id="PTHR43741:SF2">
    <property type="entry name" value="FMN-DEPENDENT NADH:QUINONE OXIDOREDUCTASE"/>
    <property type="match status" value="1"/>
</dbReference>
<dbReference type="Pfam" id="PF02525">
    <property type="entry name" value="Flavodoxin_2"/>
    <property type="match status" value="1"/>
</dbReference>
<dbReference type="SUPFAM" id="SSF52218">
    <property type="entry name" value="Flavoproteins"/>
    <property type="match status" value="1"/>
</dbReference>
<evidence type="ECO:0000255" key="1">
    <source>
        <dbReference type="HAMAP-Rule" id="MF_01216"/>
    </source>
</evidence>
<accession>Q4QK76</accession>
<comment type="function">
    <text evidence="1">Quinone reductase that provides resistance to thiol-specific stress caused by electrophilic quinones.</text>
</comment>
<comment type="function">
    <text evidence="1">Also exhibits azoreductase activity. Catalyzes the reductive cleavage of the azo bond in aromatic azo compounds to the corresponding amines.</text>
</comment>
<comment type="catalytic activity">
    <reaction evidence="1">
        <text>2 a quinone + NADH + H(+) = 2 a 1,4-benzosemiquinone + NAD(+)</text>
        <dbReference type="Rhea" id="RHEA:65952"/>
        <dbReference type="ChEBI" id="CHEBI:15378"/>
        <dbReference type="ChEBI" id="CHEBI:57540"/>
        <dbReference type="ChEBI" id="CHEBI:57945"/>
        <dbReference type="ChEBI" id="CHEBI:132124"/>
        <dbReference type="ChEBI" id="CHEBI:134225"/>
    </reaction>
</comment>
<comment type="catalytic activity">
    <reaction evidence="1">
        <text>N,N-dimethyl-1,4-phenylenediamine + anthranilate + 2 NAD(+) = 2-(4-dimethylaminophenyl)diazenylbenzoate + 2 NADH + 2 H(+)</text>
        <dbReference type="Rhea" id="RHEA:55872"/>
        <dbReference type="ChEBI" id="CHEBI:15378"/>
        <dbReference type="ChEBI" id="CHEBI:15783"/>
        <dbReference type="ChEBI" id="CHEBI:16567"/>
        <dbReference type="ChEBI" id="CHEBI:57540"/>
        <dbReference type="ChEBI" id="CHEBI:57945"/>
        <dbReference type="ChEBI" id="CHEBI:71579"/>
        <dbReference type="EC" id="1.7.1.17"/>
    </reaction>
</comment>
<comment type="cofactor">
    <cofactor evidence="1">
        <name>FMN</name>
        <dbReference type="ChEBI" id="CHEBI:58210"/>
    </cofactor>
    <text evidence="1">Binds 1 FMN per subunit.</text>
</comment>
<comment type="subunit">
    <text evidence="1">Homodimer.</text>
</comment>
<comment type="similarity">
    <text evidence="1">Belongs to the azoreductase type 1 family.</text>
</comment>
<gene>
    <name evidence="1" type="primary">azoR</name>
    <name type="ordered locus">NTHI1798</name>
</gene>
<organism>
    <name type="scientific">Haemophilus influenzae (strain 86-028NP)</name>
    <dbReference type="NCBI Taxonomy" id="281310"/>
    <lineage>
        <taxon>Bacteria</taxon>
        <taxon>Pseudomonadati</taxon>
        <taxon>Pseudomonadota</taxon>
        <taxon>Gammaproteobacteria</taxon>
        <taxon>Pasteurellales</taxon>
        <taxon>Pasteurellaceae</taxon>
        <taxon>Haemophilus</taxon>
    </lineage>
</organism>
<sequence>MSNVLVLKSSISGNNSQTNQLADYVIEKLQGNNIVVRDLSQQPLPYFDTAAAIAVRGEPKTTEEKQLLALSDKLIEELKNAQTLIIGAPMYNLNVPTQLKSYFDFIARPRVTFQYTANGSEGLLKGKKAIVLCAFGGLYDEENLVTQYMKSILGFIGITDVQFVYAQGIGFGPEAIEKAQASAKNKINEIVAAL</sequence>
<protein>
    <recommendedName>
        <fullName evidence="1">FMN-dependent NADH:quinone oxidoreductase</fullName>
        <ecNumber evidence="1">1.6.5.-</ecNumber>
    </recommendedName>
    <alternativeName>
        <fullName evidence="1">Azo-dye reductase</fullName>
    </alternativeName>
    <alternativeName>
        <fullName evidence="1">FMN-dependent NADH-azo compound oxidoreductase</fullName>
    </alternativeName>
    <alternativeName>
        <fullName evidence="1">FMN-dependent NADH-azoreductase</fullName>
        <ecNumber evidence="1">1.7.1.17</ecNumber>
    </alternativeName>
</protein>